<gene>
    <name type="primary">nop7</name>
    <name type="ORF">AFUB_065290</name>
</gene>
<comment type="function">
    <text evidence="1">Component of the NOP7 complex, which is required for maturation of the 25S and 5.8S ribosomal RNAs and formation of the 60S ribosome.</text>
</comment>
<comment type="subunit">
    <text evidence="1">Component of the NOP7 complex, composed of erb1, nop7 and ytm1. The complex is held together by erb1, which interacts with nop7 via its N-terminal domain and with ytm1 via a high-affinity interaction between the seven-bladed beta-propeller domains of the 2 proteins. The NOP7 complex associates with the 66S pre-ribosome.</text>
</comment>
<comment type="subcellular location">
    <subcellularLocation>
        <location evidence="1">Nucleus</location>
        <location evidence="1">Nucleolus</location>
    </subcellularLocation>
    <subcellularLocation>
        <location evidence="1">Nucleus</location>
        <location evidence="1">Nucleoplasm</location>
    </subcellularLocation>
</comment>
<comment type="similarity">
    <text evidence="1">Belongs to the pescadillo family.</text>
</comment>
<protein>
    <recommendedName>
        <fullName evidence="1">Pescadillo homolog</fullName>
    </recommendedName>
    <alternativeName>
        <fullName evidence="1">Nucleolar protein 7 homolog</fullName>
    </alternativeName>
</protein>
<reference key="1">
    <citation type="journal article" date="2008" name="PLoS Genet.">
        <title>Genomic islands in the pathogenic filamentous fungus Aspergillus fumigatus.</title>
        <authorList>
            <person name="Fedorova N.D."/>
            <person name="Khaldi N."/>
            <person name="Joardar V.S."/>
            <person name="Maiti R."/>
            <person name="Amedeo P."/>
            <person name="Anderson M.J."/>
            <person name="Crabtree J."/>
            <person name="Silva J.C."/>
            <person name="Badger J.H."/>
            <person name="Albarraq A."/>
            <person name="Angiuoli S."/>
            <person name="Bussey H."/>
            <person name="Bowyer P."/>
            <person name="Cotty P.J."/>
            <person name="Dyer P.S."/>
            <person name="Egan A."/>
            <person name="Galens K."/>
            <person name="Fraser-Liggett C.M."/>
            <person name="Haas B.J."/>
            <person name="Inman J.M."/>
            <person name="Kent R."/>
            <person name="Lemieux S."/>
            <person name="Malavazi I."/>
            <person name="Orvis J."/>
            <person name="Roemer T."/>
            <person name="Ronning C.M."/>
            <person name="Sundaram J.P."/>
            <person name="Sutton G."/>
            <person name="Turner G."/>
            <person name="Venter J.C."/>
            <person name="White O.R."/>
            <person name="Whitty B.R."/>
            <person name="Youngman P."/>
            <person name="Wolfe K.H."/>
            <person name="Goldman G.H."/>
            <person name="Wortman J.R."/>
            <person name="Jiang B."/>
            <person name="Denning D.W."/>
            <person name="Nierman W.C."/>
        </authorList>
    </citation>
    <scope>NUCLEOTIDE SEQUENCE [LARGE SCALE GENOMIC DNA]</scope>
    <source>
        <strain>CBS 144.89 / FGSC A1163 / CEA10</strain>
    </source>
</reference>
<sequence length="675" mass="75396">MGKIKKKGTSGQAKNYITRTQAVRKLQISLPDFRRLCIFKGIYPREPRNKKKASKTSTPNTTFYYTKDIQYLLHEPLLRKFREQKAVAKKIARSLGRGEVGDAARLEKNHAPKLTLDHVIKERYPTFIDALRDLDDALSLLFLFANLPSTAHVPPKTIALCQRLCHEFQHYLITTNSLRKSFLSIKGIYYQATIQGQDILWLVPYRFVQRVNGDVDYRIMATFVDFYTTLLGFVNFRLYSSIGLRYPPKFDTRSDENGAELAAFTLEGRGVGDAPKAIEAGNTQATTSTNNKEVSKEIQAKVDNVIKSAGLDEAKEEPAAETTEESSETIDKFEPAAPEADTLPQPDLSGNEAGSLFAPFTFYISREAPRAPLEFILRAFGCKRIGWDAVLGDGAFTHDETDTRITHQIVDRPQLPESSLPAIPAASKDGSDAVQKVKPGTRIPGRTYVQPQWVWDCINEGRLVRPDLYAPGATLPPHLSPWVKPSRGGYDPKASLAEQEEEGEAELDEDSDEEMEEATSDKKAEAKADVGSESEDEDESVDGGMDVAGTDDDESESEDEEEDFDGFEEEAASESEDEEEAARTQHQKELEAEAAGLPFSSNGATSDGSKKKASQAKKIAAKKRKEEEELERQKMMMSRKKRKLLEKMIYSNKKQSEEAAKLRSKRRKLEKGAAK</sequence>
<accession>B0Y612</accession>
<proteinExistence type="inferred from homology"/>
<dbReference type="EMBL" id="DS499598">
    <property type="protein sequence ID" value="EDP50197.1"/>
    <property type="molecule type" value="Genomic_DNA"/>
</dbReference>
<dbReference type="SMR" id="B0Y612"/>
<dbReference type="EnsemblFungi" id="EDP50197">
    <property type="protein sequence ID" value="EDP50197"/>
    <property type="gene ID" value="AFUB_065290"/>
</dbReference>
<dbReference type="VEuPathDB" id="FungiDB:AFUB_065290"/>
<dbReference type="HOGENOM" id="CLU_019619_1_1_1"/>
<dbReference type="OrthoDB" id="122040at5052"/>
<dbReference type="PhylomeDB" id="B0Y612"/>
<dbReference type="Proteomes" id="UP000001699">
    <property type="component" value="Unassembled WGS sequence"/>
</dbReference>
<dbReference type="GO" id="GO:0005654">
    <property type="term" value="C:nucleoplasm"/>
    <property type="evidence" value="ECO:0007669"/>
    <property type="project" value="UniProtKB-SubCell"/>
</dbReference>
<dbReference type="GO" id="GO:0070545">
    <property type="term" value="C:PeBoW complex"/>
    <property type="evidence" value="ECO:0007669"/>
    <property type="project" value="TreeGrafter"/>
</dbReference>
<dbReference type="GO" id="GO:0030687">
    <property type="term" value="C:preribosome, large subunit precursor"/>
    <property type="evidence" value="ECO:0007669"/>
    <property type="project" value="UniProtKB-UniRule"/>
</dbReference>
<dbReference type="GO" id="GO:0043021">
    <property type="term" value="F:ribonucleoprotein complex binding"/>
    <property type="evidence" value="ECO:0007669"/>
    <property type="project" value="UniProtKB-UniRule"/>
</dbReference>
<dbReference type="GO" id="GO:0003723">
    <property type="term" value="F:RNA binding"/>
    <property type="evidence" value="ECO:0007669"/>
    <property type="project" value="TreeGrafter"/>
</dbReference>
<dbReference type="GO" id="GO:0000466">
    <property type="term" value="P:maturation of 5.8S rRNA from tricistronic rRNA transcript (SSU-rRNA, 5.8S rRNA, LSU-rRNA)"/>
    <property type="evidence" value="ECO:0007669"/>
    <property type="project" value="UniProtKB-UniRule"/>
</dbReference>
<dbReference type="GO" id="GO:0000463">
    <property type="term" value="P:maturation of LSU-rRNA from tricistronic rRNA transcript (SSU-rRNA, 5.8S rRNA, LSU-rRNA)"/>
    <property type="evidence" value="ECO:0007669"/>
    <property type="project" value="UniProtKB-UniRule"/>
</dbReference>
<dbReference type="CDD" id="cd17709">
    <property type="entry name" value="BRCT_pescadillo_like"/>
    <property type="match status" value="1"/>
</dbReference>
<dbReference type="FunFam" id="3.40.50.10190:FF:000056">
    <property type="entry name" value="Pescadillo homolog"/>
    <property type="match status" value="1"/>
</dbReference>
<dbReference type="Gene3D" id="3.40.50.10190">
    <property type="entry name" value="BRCT domain"/>
    <property type="match status" value="1"/>
</dbReference>
<dbReference type="HAMAP" id="MF_03028">
    <property type="entry name" value="Pescadillo"/>
    <property type="match status" value="1"/>
</dbReference>
<dbReference type="InterPro" id="IPR001357">
    <property type="entry name" value="BRCT_dom"/>
</dbReference>
<dbReference type="InterPro" id="IPR036420">
    <property type="entry name" value="BRCT_dom_sf"/>
</dbReference>
<dbReference type="InterPro" id="IPR010613">
    <property type="entry name" value="PES"/>
</dbReference>
<dbReference type="PANTHER" id="PTHR12221">
    <property type="entry name" value="PESCADILLO - RELATED"/>
    <property type="match status" value="1"/>
</dbReference>
<dbReference type="PANTHER" id="PTHR12221:SF6">
    <property type="entry name" value="PESCADILLO HOMOLOG"/>
    <property type="match status" value="1"/>
</dbReference>
<dbReference type="Pfam" id="PF06732">
    <property type="entry name" value="Pescadillo_N"/>
    <property type="match status" value="1"/>
</dbReference>
<dbReference type="SUPFAM" id="SSF52113">
    <property type="entry name" value="BRCT domain"/>
    <property type="match status" value="1"/>
</dbReference>
<dbReference type="PROSITE" id="PS50172">
    <property type="entry name" value="BRCT"/>
    <property type="match status" value="1"/>
</dbReference>
<name>PESC_ASPFC</name>
<feature type="chain" id="PRO_0000370479" description="Pescadillo homolog">
    <location>
        <begin position="1"/>
        <end position="675"/>
    </location>
</feature>
<feature type="domain" description="BRCT" evidence="1">
    <location>
        <begin position="352"/>
        <end position="471"/>
    </location>
</feature>
<feature type="region of interest" description="Disordered" evidence="2">
    <location>
        <begin position="309"/>
        <end position="331"/>
    </location>
</feature>
<feature type="region of interest" description="Disordered" evidence="2">
    <location>
        <begin position="475"/>
        <end position="675"/>
    </location>
</feature>
<feature type="coiled-coil region" evidence="1">
    <location>
        <begin position="551"/>
        <end position="675"/>
    </location>
</feature>
<feature type="compositionally biased region" description="Acidic residues" evidence="2">
    <location>
        <begin position="498"/>
        <end position="518"/>
    </location>
</feature>
<feature type="compositionally biased region" description="Basic and acidic residues" evidence="2">
    <location>
        <begin position="519"/>
        <end position="530"/>
    </location>
</feature>
<feature type="compositionally biased region" description="Acidic residues" evidence="2">
    <location>
        <begin position="532"/>
        <end position="541"/>
    </location>
</feature>
<feature type="compositionally biased region" description="Acidic residues" evidence="2">
    <location>
        <begin position="549"/>
        <end position="580"/>
    </location>
</feature>
<feature type="compositionally biased region" description="Basic and acidic residues" evidence="2">
    <location>
        <begin position="581"/>
        <end position="591"/>
    </location>
</feature>
<feature type="compositionally biased region" description="Basic residues" evidence="2">
    <location>
        <begin position="611"/>
        <end position="623"/>
    </location>
</feature>
<feature type="compositionally biased region" description="Basic and acidic residues" evidence="2">
    <location>
        <begin position="624"/>
        <end position="634"/>
    </location>
</feature>
<keyword id="KW-0175">Coiled coil</keyword>
<keyword id="KW-0539">Nucleus</keyword>
<keyword id="KW-0690">Ribosome biogenesis</keyword>
<keyword id="KW-0698">rRNA processing</keyword>
<evidence type="ECO:0000255" key="1">
    <source>
        <dbReference type="HAMAP-Rule" id="MF_03028"/>
    </source>
</evidence>
<evidence type="ECO:0000256" key="2">
    <source>
        <dbReference type="SAM" id="MobiDB-lite"/>
    </source>
</evidence>
<organism>
    <name type="scientific">Aspergillus fumigatus (strain CBS 144.89 / FGSC A1163 / CEA10)</name>
    <name type="common">Neosartorya fumigata</name>
    <dbReference type="NCBI Taxonomy" id="451804"/>
    <lineage>
        <taxon>Eukaryota</taxon>
        <taxon>Fungi</taxon>
        <taxon>Dikarya</taxon>
        <taxon>Ascomycota</taxon>
        <taxon>Pezizomycotina</taxon>
        <taxon>Eurotiomycetes</taxon>
        <taxon>Eurotiomycetidae</taxon>
        <taxon>Eurotiales</taxon>
        <taxon>Aspergillaceae</taxon>
        <taxon>Aspergillus</taxon>
        <taxon>Aspergillus subgen. Fumigati</taxon>
    </lineage>
</organism>